<organism>
    <name type="scientific">Vaccinia virus (strain Copenhagen)</name>
    <name type="common">VACV</name>
    <dbReference type="NCBI Taxonomy" id="10249"/>
    <lineage>
        <taxon>Viruses</taxon>
        <taxon>Varidnaviria</taxon>
        <taxon>Bamfordvirae</taxon>
        <taxon>Nucleocytoviricota</taxon>
        <taxon>Pokkesviricetes</taxon>
        <taxon>Chitovirales</taxon>
        <taxon>Poxviridae</taxon>
        <taxon>Chordopoxvirinae</taxon>
        <taxon>Orthopoxvirus</taxon>
        <taxon>Vaccinia virus</taxon>
    </lineage>
</organism>
<sequence>MISLSFLIHNPLKKWKLKPSISINGYRSTFTMAFPCAQFRPCHCHATKDSLNTVADVRHCLTEYILWVSHRWTHRESAGSLYRLLISFRTDATELFGGELKDSLPWDNIDNCVEIIKCFIRNDSMKTAEELRAIIGLCTQSAIVSGRVFNDKYIDILLMLRKILNENDYLTLLDHIRTAKY</sequence>
<keyword id="KW-1185">Reference proteome</keyword>
<dbReference type="EMBL" id="M35027">
    <property type="protein sequence ID" value="AAA48221.1"/>
    <property type="molecule type" value="Genomic_DNA"/>
</dbReference>
<dbReference type="EMBL" id="M35027">
    <property type="protein sequence ID" value="AAA47980.1"/>
    <property type="molecule type" value="Genomic_DNA"/>
</dbReference>
<dbReference type="PIR" id="C42528">
    <property type="entry name" value="C42528"/>
</dbReference>
<dbReference type="SMR" id="P21100"/>
<dbReference type="Proteomes" id="UP000008269">
    <property type="component" value="Segment"/>
</dbReference>
<dbReference type="Gene3D" id="1.10.437.20">
    <property type="entry name" value="dsDNA poxvirus"/>
    <property type="match status" value="1"/>
</dbReference>
<dbReference type="InterPro" id="IPR011212">
    <property type="entry name" value="Poxvirus_B14/B22/C16"/>
</dbReference>
<dbReference type="InterPro" id="IPR022819">
    <property type="entry name" value="Poxvirus_Bcl-2-like"/>
</dbReference>
<dbReference type="InterPro" id="IPR043018">
    <property type="entry name" value="Poxvirus_sf"/>
</dbReference>
<dbReference type="Pfam" id="PF06227">
    <property type="entry name" value="Poxv_Bcl-2-like"/>
    <property type="match status" value="1"/>
</dbReference>
<dbReference type="PIRSF" id="PIRSF017324">
    <property type="entry name" value="UCP017324"/>
    <property type="match status" value="1"/>
</dbReference>
<protein>
    <recommendedName>
        <fullName>Protein OPG005</fullName>
    </recommendedName>
    <alternativeName>
        <fullName>Protein C16/B22</fullName>
    </alternativeName>
</protein>
<feature type="chain" id="PRO_0000099416" description="Protein OPG005">
    <location>
        <begin position="1"/>
        <end position="181"/>
    </location>
</feature>
<name>PG005_VACCC</name>
<reference key="1">
    <citation type="journal article" date="1990" name="Virology">
        <title>The complete DNA sequence of vaccinia virus.</title>
        <authorList>
            <person name="Goebel S.J."/>
            <person name="Johnson G.P."/>
            <person name="Perkus M.E."/>
            <person name="Davis S.W."/>
            <person name="Winslow J.P."/>
            <person name="Paoletti E."/>
        </authorList>
    </citation>
    <scope>NUCLEOTIDE SEQUENCE [LARGE SCALE GENOMIC DNA]</scope>
</reference>
<reference key="2">
    <citation type="journal article" date="1990" name="Virology">
        <title>Appendix to 'The complete DNA sequence of vaccinia virus'.</title>
        <authorList>
            <person name="Goebel S.J."/>
            <person name="Johnson G.P."/>
            <person name="Perkus M.E."/>
            <person name="Davis S.W."/>
            <person name="Winslow J.P."/>
            <person name="Paoletti E."/>
        </authorList>
    </citation>
    <scope>COMPLETE GENOME</scope>
</reference>
<accession>P21100</accession>
<gene>
    <name type="primary">OPG005</name>
    <name type="ORF">C16L</name>
</gene>
<organismHost>
    <name type="scientific">Homo sapiens</name>
    <name type="common">Human</name>
    <dbReference type="NCBI Taxonomy" id="9606"/>
</organismHost>
<proteinExistence type="predicted"/>